<organism>
    <name type="scientific">Archaeoglobus fulgidus (strain ATCC 49558 / DSM 4304 / JCM 9628 / NBRC 100126 / VC-16)</name>
    <dbReference type="NCBI Taxonomy" id="224325"/>
    <lineage>
        <taxon>Archaea</taxon>
        <taxon>Methanobacteriati</taxon>
        <taxon>Methanobacteriota</taxon>
        <taxon>Archaeoglobi</taxon>
        <taxon>Archaeoglobales</taxon>
        <taxon>Archaeoglobaceae</taxon>
        <taxon>Archaeoglobus</taxon>
    </lineage>
</organism>
<gene>
    <name type="primary">cdhB1</name>
    <name type="ordered locus">AF_1101</name>
</gene>
<proteinExistence type="inferred from homology"/>
<comment type="function">
    <text evidence="1">Part of a complex that catalyzes the reversible cleavage of acetyl-CoA, allowing autotrophic growth from CO(2). The alpha-epsilon subcomponent functions as a carbon monoxide dehydrogenase. The precise role of the epsilon subunit is unclear; it may have a stabilizing role within the alpha(2)epsilon(2) component and/or be involved in electron transfer to FAD during a potential FAD-mediated CO oxidation.</text>
</comment>
<comment type="subunit">
    <text evidence="1">Heterotetramer of two alpha and two epsilon subunits. The ACDS complex is made up of alpha, epsilon, beta, gamma and delta subunits with a probable stoichiometry of (alpha(2)epsilon(2))(4)-beta(8)-(gamma(1)delta(1))(8).</text>
</comment>
<comment type="similarity">
    <text evidence="1">Belongs to the CdhB family.</text>
</comment>
<name>ACDE1_ARCFU</name>
<evidence type="ECO:0000255" key="1">
    <source>
        <dbReference type="HAMAP-Rule" id="MF_01134"/>
    </source>
</evidence>
<feature type="chain" id="PRO_0000155086" description="Acetyl-CoA decarbonylase/synthase complex subunit epsilon 1">
    <location>
        <begin position="1"/>
        <end position="184"/>
    </location>
</feature>
<reference key="1">
    <citation type="journal article" date="1997" name="Nature">
        <title>The complete genome sequence of the hyperthermophilic, sulphate-reducing archaeon Archaeoglobus fulgidus.</title>
        <authorList>
            <person name="Klenk H.-P."/>
            <person name="Clayton R.A."/>
            <person name="Tomb J.-F."/>
            <person name="White O."/>
            <person name="Nelson K.E."/>
            <person name="Ketchum K.A."/>
            <person name="Dodson R.J."/>
            <person name="Gwinn M.L."/>
            <person name="Hickey E.K."/>
            <person name="Peterson J.D."/>
            <person name="Richardson D.L."/>
            <person name="Kerlavage A.R."/>
            <person name="Graham D.E."/>
            <person name="Kyrpides N.C."/>
            <person name="Fleischmann R.D."/>
            <person name="Quackenbush J."/>
            <person name="Lee N.H."/>
            <person name="Sutton G.G."/>
            <person name="Gill S.R."/>
            <person name="Kirkness E.F."/>
            <person name="Dougherty B.A."/>
            <person name="McKenney K."/>
            <person name="Adams M.D."/>
            <person name="Loftus B.J."/>
            <person name="Peterson S.N."/>
            <person name="Reich C.I."/>
            <person name="McNeil L.K."/>
            <person name="Badger J.H."/>
            <person name="Glodek A."/>
            <person name="Zhou L."/>
            <person name="Overbeek R."/>
            <person name="Gocayne J.D."/>
            <person name="Weidman J.F."/>
            <person name="McDonald L.A."/>
            <person name="Utterback T.R."/>
            <person name="Cotton M.D."/>
            <person name="Spriggs T."/>
            <person name="Artiach P."/>
            <person name="Kaine B.P."/>
            <person name="Sykes S.M."/>
            <person name="Sadow P.W."/>
            <person name="D'Andrea K.P."/>
            <person name="Bowman C."/>
            <person name="Fujii C."/>
            <person name="Garland S.A."/>
            <person name="Mason T.M."/>
            <person name="Olsen G.J."/>
            <person name="Fraser C.M."/>
            <person name="Smith H.O."/>
            <person name="Woese C.R."/>
            <person name="Venter J.C."/>
        </authorList>
    </citation>
    <scope>NUCLEOTIDE SEQUENCE [LARGE SCALE GENOMIC DNA]</scope>
    <source>
        <strain>ATCC 49558 / DSM 4304 / JCM 9628 / NBRC 100126 / VC-16</strain>
    </source>
</reference>
<protein>
    <recommendedName>
        <fullName evidence="1">Acetyl-CoA decarbonylase/synthase complex subunit epsilon 1</fullName>
        <shortName evidence="1">ACDS complex subunit epsilon 1</shortName>
    </recommendedName>
    <alternativeName>
        <fullName evidence="1">ACDS complex carbon monoxide dehydrogenase subunit epsilon 1</fullName>
        <shortName evidence="1">ACDS CODH subunit epsilon 1</shortName>
    </alternativeName>
</protein>
<dbReference type="EMBL" id="AE000782">
    <property type="protein sequence ID" value="AAB90135.1"/>
    <property type="molecule type" value="Genomic_DNA"/>
</dbReference>
<dbReference type="PIR" id="D69387">
    <property type="entry name" value="D69387"/>
</dbReference>
<dbReference type="SMR" id="O29164"/>
<dbReference type="STRING" id="224325.AF_1101"/>
<dbReference type="PaxDb" id="224325-AF_1101"/>
<dbReference type="EnsemblBacteria" id="AAB90135">
    <property type="protein sequence ID" value="AAB90135"/>
    <property type="gene ID" value="AF_1101"/>
</dbReference>
<dbReference type="KEGG" id="afu:AF_1101"/>
<dbReference type="eggNOG" id="arCOG04408">
    <property type="taxonomic scope" value="Archaea"/>
</dbReference>
<dbReference type="HOGENOM" id="CLU_123700_0_0_2"/>
<dbReference type="OrthoDB" id="120588at2157"/>
<dbReference type="PhylomeDB" id="O29164"/>
<dbReference type="BioCyc" id="MetaCyc:AF_RS05565-MONOMER"/>
<dbReference type="Proteomes" id="UP000002199">
    <property type="component" value="Chromosome"/>
</dbReference>
<dbReference type="GO" id="GO:0019385">
    <property type="term" value="P:methanogenesis, from acetate"/>
    <property type="evidence" value="ECO:0007669"/>
    <property type="project" value="InterPro"/>
</dbReference>
<dbReference type="Gene3D" id="3.40.50.1220">
    <property type="entry name" value="TPP-binding domain"/>
    <property type="match status" value="1"/>
</dbReference>
<dbReference type="HAMAP" id="MF_01134">
    <property type="entry name" value="CdhB"/>
    <property type="match status" value="1"/>
</dbReference>
<dbReference type="InterPro" id="IPR003704">
    <property type="entry name" value="CdhB"/>
</dbReference>
<dbReference type="InterPro" id="IPR029035">
    <property type="entry name" value="DHS-like_NAD/FAD-binding_dom"/>
</dbReference>
<dbReference type="NCBIfam" id="TIGR00315">
    <property type="entry name" value="cdhB"/>
    <property type="match status" value="1"/>
</dbReference>
<dbReference type="Pfam" id="PF02552">
    <property type="entry name" value="CO_dh"/>
    <property type="match status" value="1"/>
</dbReference>
<dbReference type="PIRSF" id="PIRSF006035">
    <property type="entry name" value="CO_dh_b_ACDS_e"/>
    <property type="match status" value="1"/>
</dbReference>
<dbReference type="SUPFAM" id="SSF52467">
    <property type="entry name" value="DHS-like NAD/FAD-binding domain"/>
    <property type="match status" value="1"/>
</dbReference>
<sequence length="184" mass="20908">MMEMAVAKEEKFPTAKRFDIADIQVSREATAVKPKVVANMIKRAKRPLLVTGGQLLKDEKLVEFAVKFAEKGIPIAATAGSSKPLIERGIKPVSKTYTLHQITQFLQDEEFQGFDGNGNYDTVIFLGFLPYYLSRMLSSLKHFSKITTIAIDEFYQPHAKFSFTNLTKDRELYYSMLQEVLDNL</sequence>
<keyword id="KW-1185">Reference proteome</keyword>
<accession>O29164</accession>